<keyword id="KW-0067">ATP-binding</keyword>
<keyword id="KW-0963">Cytoplasm</keyword>
<keyword id="KW-0436">Ligase</keyword>
<keyword id="KW-0460">Magnesium</keyword>
<keyword id="KW-0479">Metal-binding</keyword>
<keyword id="KW-0547">Nucleotide-binding</keyword>
<keyword id="KW-0658">Purine biosynthesis</keyword>
<reference key="1">
    <citation type="journal article" date="2006" name="J. Bacteriol.">
        <title>Whole-genome sequence of Listeria welshimeri reveals common steps in genome reduction with Listeria innocua as compared to Listeria monocytogenes.</title>
        <authorList>
            <person name="Hain T."/>
            <person name="Steinweg C."/>
            <person name="Kuenne C.T."/>
            <person name="Billion A."/>
            <person name="Ghai R."/>
            <person name="Chatterjee S.S."/>
            <person name="Domann E."/>
            <person name="Kaerst U."/>
            <person name="Goesmann A."/>
            <person name="Bekel T."/>
            <person name="Bartels D."/>
            <person name="Kaiser O."/>
            <person name="Meyer F."/>
            <person name="Puehler A."/>
            <person name="Weisshaar B."/>
            <person name="Wehland J."/>
            <person name="Liang C."/>
            <person name="Dandekar T."/>
            <person name="Lampidis R."/>
            <person name="Kreft J."/>
            <person name="Goebel W."/>
            <person name="Chakraborty T."/>
        </authorList>
    </citation>
    <scope>NUCLEOTIDE SEQUENCE [LARGE SCALE GENOMIC DNA]</scope>
    <source>
        <strain>ATCC 35897 / DSM 20650 / CCUG 15529 / CIP 8149 / NCTC 11857 / SLCC 5334 / V8</strain>
    </source>
</reference>
<accession>A0AJM3</accession>
<evidence type="ECO:0000255" key="1">
    <source>
        <dbReference type="HAMAP-Rule" id="MF_00420"/>
    </source>
</evidence>
<proteinExistence type="inferred from homology"/>
<protein>
    <recommendedName>
        <fullName evidence="1">Phosphoribosylformylglycinamidine synthase subunit PurL</fullName>
        <shortName evidence="1">FGAM synthase</shortName>
        <ecNumber evidence="1">6.3.5.3</ecNumber>
    </recommendedName>
    <alternativeName>
        <fullName evidence="1">Formylglycinamide ribonucleotide amidotransferase subunit II</fullName>
        <shortName evidence="1">FGAR amidotransferase II</shortName>
        <shortName evidence="1">FGAR-AT II</shortName>
    </alternativeName>
    <alternativeName>
        <fullName evidence="1">Glutamine amidotransferase PurL</fullName>
    </alternativeName>
    <alternativeName>
        <fullName evidence="1">Phosphoribosylformylglycinamidine synthase subunit II</fullName>
    </alternativeName>
</protein>
<sequence>MPNMEPTTKEIKEQKIYQEMGLTDSEYELVCSILGREPNYTETGLFSVMWSEHCSYKNSKPVLRKFPTEGKQVLQGPGEGAGIVDIGDGLGVAFKVESHNHPSYVEPYQGAATGVGGIIRDVFSMGARPIAMLNSLRFGELDTPHSKYLVSEVVAGIAGYGNSIGIPTVGGEIQFDPCYTKNPLVNAMCVGLIEAKDIQKGQAKGIGNPVMYVGAKTGRDGIHGATFASVEFSEEGEQQRSAVQVGDPFMEKLLLEACLDVIRDHSDILVGIQDMGAAGLVSSSSEMASKAGAGLELIMDDVPQRELNMTPYEMLLSESQERMLLCVKKGHVDEIQALFDRYGLEAVVIGKVTDDKMYKIIHHGEVVANVPVDALAEDAPVYHKPSTEPARYQAFQEEQPFVPVMEDVVEVWKELLAQPTIASKRHIYEQYDYQVRTDTAVVPGSDAAIVRVRGTEKAIAMTTDCNSRYLYLDPEVGGAIAVAEAARNIVCSGGKPLAITDGLNFGNPEKPEIFWEIEKAADGISAACLELDTPVISGNVSLYNETDGTGIYPTPVIGMVGLVEDLAHITTQDFKNSGDVIFLIGETKAEYNGSELQKLQQGKISGRAPELDLTTEKKYQELLLTAIREGLVSSSHDLAEGGFGVALAEATFKAGLGADVEVPFALNQLFSESQSRFLVSVKPENEAVFAKIMEQEKVYRLGVVTADETIRVKYKEEEVTASTTDLRSIWEGAIPCLLK</sequence>
<comment type="function">
    <text evidence="1">Part of the phosphoribosylformylglycinamidine synthase complex involved in the purines biosynthetic pathway. Catalyzes the ATP-dependent conversion of formylglycinamide ribonucleotide (FGAR) and glutamine to yield formylglycinamidine ribonucleotide (FGAM) and glutamate. The FGAM synthase complex is composed of three subunits. PurQ produces an ammonia molecule by converting glutamine to glutamate. PurL transfers the ammonia molecule to FGAR to form FGAM in an ATP-dependent manner. PurS interacts with PurQ and PurL and is thought to assist in the transfer of the ammonia molecule from PurQ to PurL.</text>
</comment>
<comment type="catalytic activity">
    <reaction evidence="1">
        <text>N(2)-formyl-N(1)-(5-phospho-beta-D-ribosyl)glycinamide + L-glutamine + ATP + H2O = 2-formamido-N(1)-(5-O-phospho-beta-D-ribosyl)acetamidine + L-glutamate + ADP + phosphate + H(+)</text>
        <dbReference type="Rhea" id="RHEA:17129"/>
        <dbReference type="ChEBI" id="CHEBI:15377"/>
        <dbReference type="ChEBI" id="CHEBI:15378"/>
        <dbReference type="ChEBI" id="CHEBI:29985"/>
        <dbReference type="ChEBI" id="CHEBI:30616"/>
        <dbReference type="ChEBI" id="CHEBI:43474"/>
        <dbReference type="ChEBI" id="CHEBI:58359"/>
        <dbReference type="ChEBI" id="CHEBI:147286"/>
        <dbReference type="ChEBI" id="CHEBI:147287"/>
        <dbReference type="ChEBI" id="CHEBI:456216"/>
        <dbReference type="EC" id="6.3.5.3"/>
    </reaction>
</comment>
<comment type="pathway">
    <text evidence="1">Purine metabolism; IMP biosynthesis via de novo pathway; 5-amino-1-(5-phospho-D-ribosyl)imidazole from N(2)-formyl-N(1)-(5-phospho-D-ribosyl)glycinamide: step 1/2.</text>
</comment>
<comment type="subunit">
    <text evidence="1">Monomer. Part of the FGAM synthase complex composed of 1 PurL, 1 PurQ and 2 PurS subunits.</text>
</comment>
<comment type="subcellular location">
    <subcellularLocation>
        <location evidence="1">Cytoplasm</location>
    </subcellularLocation>
</comment>
<comment type="similarity">
    <text evidence="1">Belongs to the FGAMS family.</text>
</comment>
<name>PURL_LISW6</name>
<organism>
    <name type="scientific">Listeria welshimeri serovar 6b (strain ATCC 35897 / DSM 20650 / CCUG 15529 / CIP 8149 / NCTC 11857 / SLCC 5334 / V8)</name>
    <dbReference type="NCBI Taxonomy" id="386043"/>
    <lineage>
        <taxon>Bacteria</taxon>
        <taxon>Bacillati</taxon>
        <taxon>Bacillota</taxon>
        <taxon>Bacilli</taxon>
        <taxon>Bacillales</taxon>
        <taxon>Listeriaceae</taxon>
        <taxon>Listeria</taxon>
    </lineage>
</organism>
<gene>
    <name evidence="1" type="primary">purL</name>
    <name type="ordered locus">lwe1787</name>
</gene>
<feature type="chain" id="PRO_1000050318" description="Phosphoribosylformylglycinamidine synthase subunit PurL">
    <location>
        <begin position="1"/>
        <end position="739"/>
    </location>
</feature>
<feature type="active site" evidence="1">
    <location>
        <position position="53"/>
    </location>
</feature>
<feature type="active site" description="Proton acceptor" evidence="1">
    <location>
        <position position="99"/>
    </location>
</feature>
<feature type="binding site" evidence="1">
    <location>
        <position position="56"/>
    </location>
    <ligand>
        <name>ATP</name>
        <dbReference type="ChEBI" id="CHEBI:30616"/>
    </ligand>
</feature>
<feature type="binding site" evidence="1">
    <location>
        <position position="95"/>
    </location>
    <ligand>
        <name>ATP</name>
        <dbReference type="ChEBI" id="CHEBI:30616"/>
    </ligand>
</feature>
<feature type="binding site" evidence="1">
    <location>
        <position position="97"/>
    </location>
    <ligand>
        <name>Mg(2+)</name>
        <dbReference type="ChEBI" id="CHEBI:18420"/>
        <label>1</label>
    </ligand>
</feature>
<feature type="binding site" evidence="1">
    <location>
        <begin position="98"/>
        <end position="101"/>
    </location>
    <ligand>
        <name>substrate</name>
    </ligand>
</feature>
<feature type="binding site" evidence="1">
    <location>
        <position position="120"/>
    </location>
    <ligand>
        <name>substrate</name>
    </ligand>
</feature>
<feature type="binding site" evidence="1">
    <location>
        <position position="121"/>
    </location>
    <ligand>
        <name>Mg(2+)</name>
        <dbReference type="ChEBI" id="CHEBI:18420"/>
        <label>2</label>
    </ligand>
</feature>
<feature type="binding site" evidence="1">
    <location>
        <position position="244"/>
    </location>
    <ligand>
        <name>substrate</name>
    </ligand>
</feature>
<feature type="binding site" evidence="1">
    <location>
        <position position="274"/>
    </location>
    <ligand>
        <name>Mg(2+)</name>
        <dbReference type="ChEBI" id="CHEBI:18420"/>
        <label>2</label>
    </ligand>
</feature>
<feature type="binding site" evidence="1">
    <location>
        <begin position="318"/>
        <end position="320"/>
    </location>
    <ligand>
        <name>substrate</name>
    </ligand>
</feature>
<feature type="binding site" evidence="1">
    <location>
        <position position="501"/>
    </location>
    <ligand>
        <name>ATP</name>
        <dbReference type="ChEBI" id="CHEBI:30616"/>
    </ligand>
</feature>
<feature type="binding site" evidence="1">
    <location>
        <position position="538"/>
    </location>
    <ligand>
        <name>ATP</name>
        <dbReference type="ChEBI" id="CHEBI:30616"/>
    </ligand>
</feature>
<feature type="binding site" evidence="1">
    <location>
        <position position="539"/>
    </location>
    <ligand>
        <name>Mg(2+)</name>
        <dbReference type="ChEBI" id="CHEBI:18420"/>
        <label>1</label>
    </ligand>
</feature>
<feature type="binding site" evidence="1">
    <location>
        <position position="541"/>
    </location>
    <ligand>
        <name>substrate</name>
    </ligand>
</feature>
<dbReference type="EC" id="6.3.5.3" evidence="1"/>
<dbReference type="EMBL" id="AM263198">
    <property type="protein sequence ID" value="CAK21205.1"/>
    <property type="molecule type" value="Genomic_DNA"/>
</dbReference>
<dbReference type="RefSeq" id="WP_011702564.1">
    <property type="nucleotide sequence ID" value="NC_008555.1"/>
</dbReference>
<dbReference type="SMR" id="A0AJM3"/>
<dbReference type="STRING" id="386043.lwe1787"/>
<dbReference type="GeneID" id="61189685"/>
<dbReference type="KEGG" id="lwe:lwe1787"/>
<dbReference type="eggNOG" id="COG0046">
    <property type="taxonomic scope" value="Bacteria"/>
</dbReference>
<dbReference type="HOGENOM" id="CLU_003100_0_1_9"/>
<dbReference type="OrthoDB" id="9804441at2"/>
<dbReference type="UniPathway" id="UPA00074">
    <property type="reaction ID" value="UER00128"/>
</dbReference>
<dbReference type="Proteomes" id="UP000000779">
    <property type="component" value="Chromosome"/>
</dbReference>
<dbReference type="GO" id="GO:0005737">
    <property type="term" value="C:cytoplasm"/>
    <property type="evidence" value="ECO:0007669"/>
    <property type="project" value="UniProtKB-SubCell"/>
</dbReference>
<dbReference type="GO" id="GO:0005524">
    <property type="term" value="F:ATP binding"/>
    <property type="evidence" value="ECO:0007669"/>
    <property type="project" value="UniProtKB-UniRule"/>
</dbReference>
<dbReference type="GO" id="GO:0000287">
    <property type="term" value="F:magnesium ion binding"/>
    <property type="evidence" value="ECO:0007669"/>
    <property type="project" value="UniProtKB-UniRule"/>
</dbReference>
<dbReference type="GO" id="GO:0004642">
    <property type="term" value="F:phosphoribosylformylglycinamidine synthase activity"/>
    <property type="evidence" value="ECO:0007669"/>
    <property type="project" value="UniProtKB-UniRule"/>
</dbReference>
<dbReference type="GO" id="GO:0006189">
    <property type="term" value="P:'de novo' IMP biosynthetic process"/>
    <property type="evidence" value="ECO:0007669"/>
    <property type="project" value="UniProtKB-UniRule"/>
</dbReference>
<dbReference type="CDD" id="cd02203">
    <property type="entry name" value="PurL_repeat1"/>
    <property type="match status" value="1"/>
</dbReference>
<dbReference type="CDD" id="cd02204">
    <property type="entry name" value="PurL_repeat2"/>
    <property type="match status" value="1"/>
</dbReference>
<dbReference type="FunFam" id="3.30.1330.10:FF:000004">
    <property type="entry name" value="Phosphoribosylformylglycinamidine synthase subunit PurL"/>
    <property type="match status" value="1"/>
</dbReference>
<dbReference type="FunFam" id="3.90.650.10:FF:000009">
    <property type="entry name" value="Phosphoribosylformylglycinamidine synthase subunit PurL"/>
    <property type="match status" value="1"/>
</dbReference>
<dbReference type="Gene3D" id="3.90.650.10">
    <property type="entry name" value="PurM-like C-terminal domain"/>
    <property type="match status" value="2"/>
</dbReference>
<dbReference type="Gene3D" id="3.30.1330.10">
    <property type="entry name" value="PurM-like, N-terminal domain"/>
    <property type="match status" value="2"/>
</dbReference>
<dbReference type="HAMAP" id="MF_00420">
    <property type="entry name" value="PurL_2"/>
    <property type="match status" value="1"/>
</dbReference>
<dbReference type="InterPro" id="IPR010074">
    <property type="entry name" value="PRibForGlyAmidine_synth_PurL"/>
</dbReference>
<dbReference type="InterPro" id="IPR041609">
    <property type="entry name" value="PurL_linker"/>
</dbReference>
<dbReference type="InterPro" id="IPR010918">
    <property type="entry name" value="PurM-like_C_dom"/>
</dbReference>
<dbReference type="InterPro" id="IPR036676">
    <property type="entry name" value="PurM-like_C_sf"/>
</dbReference>
<dbReference type="InterPro" id="IPR016188">
    <property type="entry name" value="PurM-like_N"/>
</dbReference>
<dbReference type="InterPro" id="IPR036921">
    <property type="entry name" value="PurM-like_N_sf"/>
</dbReference>
<dbReference type="NCBIfam" id="TIGR01736">
    <property type="entry name" value="FGAM_synth_II"/>
    <property type="match status" value="1"/>
</dbReference>
<dbReference type="NCBIfam" id="NF002290">
    <property type="entry name" value="PRK01213.1"/>
    <property type="match status" value="1"/>
</dbReference>
<dbReference type="PANTHER" id="PTHR43555">
    <property type="entry name" value="PHOSPHORIBOSYLFORMYLGLYCINAMIDINE SYNTHASE SUBUNIT PURL"/>
    <property type="match status" value="1"/>
</dbReference>
<dbReference type="PANTHER" id="PTHR43555:SF1">
    <property type="entry name" value="PHOSPHORIBOSYLFORMYLGLYCINAMIDINE SYNTHASE SUBUNIT PURL"/>
    <property type="match status" value="1"/>
</dbReference>
<dbReference type="Pfam" id="PF00586">
    <property type="entry name" value="AIRS"/>
    <property type="match status" value="2"/>
</dbReference>
<dbReference type="Pfam" id="PF02769">
    <property type="entry name" value="AIRS_C"/>
    <property type="match status" value="2"/>
</dbReference>
<dbReference type="Pfam" id="PF18072">
    <property type="entry name" value="FGAR-AT_linker"/>
    <property type="match status" value="1"/>
</dbReference>
<dbReference type="PIRSF" id="PIRSF001587">
    <property type="entry name" value="FGAM_synthase_II"/>
    <property type="match status" value="1"/>
</dbReference>
<dbReference type="SUPFAM" id="SSF56042">
    <property type="entry name" value="PurM C-terminal domain-like"/>
    <property type="match status" value="2"/>
</dbReference>
<dbReference type="SUPFAM" id="SSF55326">
    <property type="entry name" value="PurM N-terminal domain-like"/>
    <property type="match status" value="2"/>
</dbReference>